<accession>A4QKY1</accession>
<proteinExistence type="inferred from homology"/>
<feature type="chain" id="PRO_0000360926" description="NAD(P)H-quinone oxidoreductase subunit 5, chloroplastic">
    <location>
        <begin position="1"/>
        <end position="746"/>
    </location>
</feature>
<feature type="transmembrane region" description="Helical" evidence="2">
    <location>
        <begin position="9"/>
        <end position="29"/>
    </location>
</feature>
<feature type="transmembrane region" description="Helical" evidence="2">
    <location>
        <begin position="40"/>
        <end position="60"/>
    </location>
</feature>
<feature type="transmembrane region" description="Helical" evidence="2">
    <location>
        <begin position="89"/>
        <end position="109"/>
    </location>
</feature>
<feature type="transmembrane region" description="Helical" evidence="2">
    <location>
        <begin position="125"/>
        <end position="145"/>
    </location>
</feature>
<feature type="transmembrane region" description="Helical" evidence="2">
    <location>
        <begin position="147"/>
        <end position="167"/>
    </location>
</feature>
<feature type="transmembrane region" description="Helical" evidence="2">
    <location>
        <begin position="185"/>
        <end position="205"/>
    </location>
</feature>
<feature type="transmembrane region" description="Helical" evidence="2">
    <location>
        <begin position="221"/>
        <end position="241"/>
    </location>
</feature>
<feature type="transmembrane region" description="Helical" evidence="2">
    <location>
        <begin position="258"/>
        <end position="278"/>
    </location>
</feature>
<feature type="transmembrane region" description="Helical" evidence="2">
    <location>
        <begin position="280"/>
        <end position="300"/>
    </location>
</feature>
<feature type="transmembrane region" description="Helical" evidence="2">
    <location>
        <begin position="327"/>
        <end position="347"/>
    </location>
</feature>
<feature type="transmembrane region" description="Helical" evidence="2">
    <location>
        <begin position="354"/>
        <end position="374"/>
    </location>
</feature>
<feature type="transmembrane region" description="Helical" evidence="2">
    <location>
        <begin position="396"/>
        <end position="416"/>
    </location>
</feature>
<feature type="transmembrane region" description="Helical" evidence="2">
    <location>
        <begin position="425"/>
        <end position="445"/>
    </location>
</feature>
<feature type="transmembrane region" description="Helical" evidence="2">
    <location>
        <begin position="547"/>
        <end position="567"/>
    </location>
</feature>
<feature type="transmembrane region" description="Helical" evidence="2">
    <location>
        <begin position="608"/>
        <end position="628"/>
    </location>
</feature>
<feature type="transmembrane region" description="Helical" evidence="2">
    <location>
        <begin position="723"/>
        <end position="743"/>
    </location>
</feature>
<geneLocation type="chloroplast"/>
<reference key="1">
    <citation type="submission" date="2007-03" db="EMBL/GenBank/DDBJ databases">
        <title>Sequencing analysis of Crucihimalaya wallichii chloroplast DNA.</title>
        <authorList>
            <person name="Hosouchi T."/>
            <person name="Tsuruoka H."/>
            <person name="Kotani H."/>
        </authorList>
    </citation>
    <scope>NUCLEOTIDE SEQUENCE [LARGE SCALE GENOMIC DNA]</scope>
</reference>
<protein>
    <recommendedName>
        <fullName>NAD(P)H-quinone oxidoreductase subunit 5, chloroplastic</fullName>
        <ecNumber>7.1.1.-</ecNumber>
    </recommendedName>
    <alternativeName>
        <fullName>NAD(P)H dehydrogenase subunit 5</fullName>
    </alternativeName>
    <alternativeName>
        <fullName>NADH-plastoquinone oxidoreductase subunit 5</fullName>
    </alternativeName>
</protein>
<keyword id="KW-0150">Chloroplast</keyword>
<keyword id="KW-0472">Membrane</keyword>
<keyword id="KW-0520">NAD</keyword>
<keyword id="KW-0521">NADP</keyword>
<keyword id="KW-0934">Plastid</keyword>
<keyword id="KW-0618">Plastoquinone</keyword>
<keyword id="KW-0874">Quinone</keyword>
<keyword id="KW-0793">Thylakoid</keyword>
<keyword id="KW-1278">Translocase</keyword>
<keyword id="KW-0812">Transmembrane</keyword>
<keyword id="KW-1133">Transmembrane helix</keyword>
<keyword id="KW-0813">Transport</keyword>
<dbReference type="EC" id="7.1.1.-"/>
<dbReference type="EMBL" id="AP009372">
    <property type="protein sequence ID" value="BAF50336.1"/>
    <property type="molecule type" value="Genomic_DNA"/>
</dbReference>
<dbReference type="RefSeq" id="YP_001123511.1">
    <property type="nucleotide sequence ID" value="NC_009271.1"/>
</dbReference>
<dbReference type="SMR" id="A4QKY1"/>
<dbReference type="GeneID" id="4962693"/>
<dbReference type="GO" id="GO:0009535">
    <property type="term" value="C:chloroplast thylakoid membrane"/>
    <property type="evidence" value="ECO:0007669"/>
    <property type="project" value="UniProtKB-SubCell"/>
</dbReference>
<dbReference type="GO" id="GO:0008137">
    <property type="term" value="F:NADH dehydrogenase (ubiquinone) activity"/>
    <property type="evidence" value="ECO:0007669"/>
    <property type="project" value="InterPro"/>
</dbReference>
<dbReference type="GO" id="GO:0048038">
    <property type="term" value="F:quinone binding"/>
    <property type="evidence" value="ECO:0007669"/>
    <property type="project" value="UniProtKB-KW"/>
</dbReference>
<dbReference type="GO" id="GO:0042773">
    <property type="term" value="P:ATP synthesis coupled electron transport"/>
    <property type="evidence" value="ECO:0007669"/>
    <property type="project" value="InterPro"/>
</dbReference>
<dbReference type="GO" id="GO:0015990">
    <property type="term" value="P:electron transport coupled proton transport"/>
    <property type="evidence" value="ECO:0007669"/>
    <property type="project" value="TreeGrafter"/>
</dbReference>
<dbReference type="FunFam" id="1.20.5.2700:FF:000003">
    <property type="entry name" value="NAD(P)H-quinone oxidoreductase subunit 5, chloroplastic"/>
    <property type="match status" value="1"/>
</dbReference>
<dbReference type="Gene3D" id="1.20.5.2700">
    <property type="match status" value="1"/>
</dbReference>
<dbReference type="InterPro" id="IPR002128">
    <property type="entry name" value="NADH_UbQ_OxRdtase_chlpt_su5_C"/>
</dbReference>
<dbReference type="InterPro" id="IPR018393">
    <property type="entry name" value="NADHpl_OxRdtase_5_subgr"/>
</dbReference>
<dbReference type="InterPro" id="IPR001750">
    <property type="entry name" value="ND/Mrp_TM"/>
</dbReference>
<dbReference type="InterPro" id="IPR003945">
    <property type="entry name" value="NU5C-like"/>
</dbReference>
<dbReference type="InterPro" id="IPR001516">
    <property type="entry name" value="Proton_antipo_N"/>
</dbReference>
<dbReference type="NCBIfam" id="TIGR01974">
    <property type="entry name" value="NDH_I_L"/>
    <property type="match status" value="1"/>
</dbReference>
<dbReference type="NCBIfam" id="NF005141">
    <property type="entry name" value="PRK06590.1"/>
    <property type="match status" value="1"/>
</dbReference>
<dbReference type="PANTHER" id="PTHR42829">
    <property type="entry name" value="NADH-UBIQUINONE OXIDOREDUCTASE CHAIN 5"/>
    <property type="match status" value="1"/>
</dbReference>
<dbReference type="PANTHER" id="PTHR42829:SF2">
    <property type="entry name" value="NADH-UBIQUINONE OXIDOREDUCTASE CHAIN 5"/>
    <property type="match status" value="1"/>
</dbReference>
<dbReference type="Pfam" id="PF01010">
    <property type="entry name" value="Proton_antipo_C"/>
    <property type="match status" value="1"/>
</dbReference>
<dbReference type="Pfam" id="PF00361">
    <property type="entry name" value="Proton_antipo_M"/>
    <property type="match status" value="1"/>
</dbReference>
<dbReference type="Pfam" id="PF00662">
    <property type="entry name" value="Proton_antipo_N"/>
    <property type="match status" value="1"/>
</dbReference>
<dbReference type="PRINTS" id="PR01434">
    <property type="entry name" value="NADHDHGNASE5"/>
</dbReference>
<dbReference type="PRINTS" id="PR01435">
    <property type="entry name" value="NPOXDRDTASE5"/>
</dbReference>
<name>NU5C_CRUWA</name>
<sequence>MDHTYQYSWIIPFIPLPVPILLGVGLLLFPTATKNLRRMWTFLSIFLLSIVMIFSLYLSIQQIFLSCIHQNVWSWTINNEFSFEFGYFIDPLTSIMSILITTVGILVLIYSDNYMSHDQGYLRFFAYMGFFNTSMLGLVTSSNLIQVYFFWELVGMCSYLLIGFWFTRPIAANACQKAFVTNRLGDFGLLLGILGLYWITGSFEFQDLFEIFNNFILNNRVNLLFLTLCAFLLFVGPIAKSAQFPLHVWLPDAMEGPTPISALIHAATMVAAGIFLVARLLPLFIVIPSIMYIISLIGIITVLLGATLALAQKDIKRGLAYSTMSQLGYMMLALGMGSYRSALFHLITHAYSKALLFLGSGSIIHSMEAIVGYSPDKSQNMILMGGLTKHVPITKTAFLVGTLSLCGIPPLACFWSKDEILNDSLLFSPIFAIIACSTAGLTAFYMFRIYFLTFEGHLNTYFINYSGKKSSSLYSLSLWGKEEEKKLNRNFGLVPLLTMNNTKRASFFCNKTYKISNNVRNQIFITIENFGLNKKTFYYPHESDNTILFPMLVLLLFTLFIGAIGIPFNQEGIDFDILSKLFTPSINLLHKNSQNFVDWYEFLRNATFSVSIAVFGIFIAYCLYKPFYSSLLNLTLLNSFQKWNSKRIRWEKLINFVYKWSYNRGYVDAFFKTSLIESIRRLAKQTNFFDKRIIDGITNGVGITSFFVGEVTKYIGGSRISSYLFLYLSYVLIFLMILFFFYFEKF</sequence>
<comment type="function">
    <text evidence="1">NDH shuttles electrons from NAD(P)H:plastoquinone, via FMN and iron-sulfur (Fe-S) centers, to quinones in the photosynthetic chain and possibly in a chloroplast respiratory chain. The immediate electron acceptor for the enzyme in this species is believed to be plastoquinone. Couples the redox reaction to proton translocation, and thus conserves the redox energy in a proton gradient (By similarity).</text>
</comment>
<comment type="catalytic activity">
    <reaction>
        <text>a plastoquinone + NADH + (n+1) H(+)(in) = a plastoquinol + NAD(+) + n H(+)(out)</text>
        <dbReference type="Rhea" id="RHEA:42608"/>
        <dbReference type="Rhea" id="RHEA-COMP:9561"/>
        <dbReference type="Rhea" id="RHEA-COMP:9562"/>
        <dbReference type="ChEBI" id="CHEBI:15378"/>
        <dbReference type="ChEBI" id="CHEBI:17757"/>
        <dbReference type="ChEBI" id="CHEBI:57540"/>
        <dbReference type="ChEBI" id="CHEBI:57945"/>
        <dbReference type="ChEBI" id="CHEBI:62192"/>
    </reaction>
</comment>
<comment type="catalytic activity">
    <reaction>
        <text>a plastoquinone + NADPH + (n+1) H(+)(in) = a plastoquinol + NADP(+) + n H(+)(out)</text>
        <dbReference type="Rhea" id="RHEA:42612"/>
        <dbReference type="Rhea" id="RHEA-COMP:9561"/>
        <dbReference type="Rhea" id="RHEA-COMP:9562"/>
        <dbReference type="ChEBI" id="CHEBI:15378"/>
        <dbReference type="ChEBI" id="CHEBI:17757"/>
        <dbReference type="ChEBI" id="CHEBI:57783"/>
        <dbReference type="ChEBI" id="CHEBI:58349"/>
        <dbReference type="ChEBI" id="CHEBI:62192"/>
    </reaction>
</comment>
<comment type="subunit">
    <text evidence="1">NDH is composed of at least 16 different subunits, 5 of which are encoded in the nucleus.</text>
</comment>
<comment type="subcellular location">
    <subcellularLocation>
        <location evidence="1">Plastid</location>
        <location evidence="1">Chloroplast thylakoid membrane</location>
        <topology evidence="1">Multi-pass membrane protein</topology>
    </subcellularLocation>
</comment>
<comment type="similarity">
    <text evidence="3">Belongs to the complex I subunit 5 family.</text>
</comment>
<gene>
    <name type="primary">ndhF</name>
</gene>
<evidence type="ECO:0000250" key="1"/>
<evidence type="ECO:0000255" key="2"/>
<evidence type="ECO:0000305" key="3"/>
<organism>
    <name type="scientific">Crucihimalaya wallichii</name>
    <name type="common">Rock-cress</name>
    <name type="synonym">Arabidopsis campestris</name>
    <dbReference type="NCBI Taxonomy" id="78192"/>
    <lineage>
        <taxon>Eukaryota</taxon>
        <taxon>Viridiplantae</taxon>
        <taxon>Streptophyta</taxon>
        <taxon>Embryophyta</taxon>
        <taxon>Tracheophyta</taxon>
        <taxon>Spermatophyta</taxon>
        <taxon>Magnoliopsida</taxon>
        <taxon>eudicotyledons</taxon>
        <taxon>Gunneridae</taxon>
        <taxon>Pentapetalae</taxon>
        <taxon>rosids</taxon>
        <taxon>malvids</taxon>
        <taxon>Brassicales</taxon>
        <taxon>Brassicaceae</taxon>
        <taxon>Crucihimalayeae</taxon>
        <taxon>Crucihimalaya</taxon>
    </lineage>
</organism>